<feature type="chain" id="PRO_1000087346" description="Peptide methionine sulfoxide reductase MsrA">
    <location>
        <begin position="1"/>
        <end position="218"/>
    </location>
</feature>
<feature type="active site" evidence="1">
    <location>
        <position position="57"/>
    </location>
</feature>
<comment type="function">
    <text evidence="1">Has an important function as a repair enzyme for proteins that have been inactivated by oxidation. Catalyzes the reversible oxidation-reduction of methionine sulfoxide in proteins to methionine.</text>
</comment>
<comment type="catalytic activity">
    <reaction evidence="1">
        <text>L-methionyl-[protein] + [thioredoxin]-disulfide + H2O = L-methionyl-(S)-S-oxide-[protein] + [thioredoxin]-dithiol</text>
        <dbReference type="Rhea" id="RHEA:14217"/>
        <dbReference type="Rhea" id="RHEA-COMP:10698"/>
        <dbReference type="Rhea" id="RHEA-COMP:10700"/>
        <dbReference type="Rhea" id="RHEA-COMP:12313"/>
        <dbReference type="Rhea" id="RHEA-COMP:12315"/>
        <dbReference type="ChEBI" id="CHEBI:15377"/>
        <dbReference type="ChEBI" id="CHEBI:16044"/>
        <dbReference type="ChEBI" id="CHEBI:29950"/>
        <dbReference type="ChEBI" id="CHEBI:44120"/>
        <dbReference type="ChEBI" id="CHEBI:50058"/>
        <dbReference type="EC" id="1.8.4.11"/>
    </reaction>
</comment>
<comment type="catalytic activity">
    <reaction evidence="1">
        <text>[thioredoxin]-disulfide + L-methionine + H2O = L-methionine (S)-S-oxide + [thioredoxin]-dithiol</text>
        <dbReference type="Rhea" id="RHEA:19993"/>
        <dbReference type="Rhea" id="RHEA-COMP:10698"/>
        <dbReference type="Rhea" id="RHEA-COMP:10700"/>
        <dbReference type="ChEBI" id="CHEBI:15377"/>
        <dbReference type="ChEBI" id="CHEBI:29950"/>
        <dbReference type="ChEBI" id="CHEBI:50058"/>
        <dbReference type="ChEBI" id="CHEBI:57844"/>
        <dbReference type="ChEBI" id="CHEBI:58772"/>
        <dbReference type="EC" id="1.8.4.11"/>
    </reaction>
</comment>
<comment type="similarity">
    <text evidence="1">Belongs to the MsrA Met sulfoxide reductase family.</text>
</comment>
<reference key="1">
    <citation type="submission" date="2007-12" db="EMBL/GenBank/DDBJ databases">
        <title>Brucella suis ATCC 23445 whole genome shotgun sequencing project.</title>
        <authorList>
            <person name="Setubal J.C."/>
            <person name="Bowns C."/>
            <person name="Boyle S."/>
            <person name="Crasta O.R."/>
            <person name="Czar M.J."/>
            <person name="Dharmanolla C."/>
            <person name="Gillespie J.J."/>
            <person name="Kenyon R.W."/>
            <person name="Lu J."/>
            <person name="Mane S."/>
            <person name="Mohapatra S."/>
            <person name="Nagrani S."/>
            <person name="Purkayastha A."/>
            <person name="Rajasimha H.K."/>
            <person name="Shallom J.M."/>
            <person name="Shallom S."/>
            <person name="Shukla M."/>
            <person name="Snyder E.E."/>
            <person name="Sobral B.W."/>
            <person name="Wattam A.R."/>
            <person name="Will R."/>
            <person name="Williams K."/>
            <person name="Yoo H."/>
            <person name="Bruce D."/>
            <person name="Detter C."/>
            <person name="Munk C."/>
            <person name="Brettin T.S."/>
        </authorList>
    </citation>
    <scope>NUCLEOTIDE SEQUENCE [LARGE SCALE GENOMIC DNA]</scope>
    <source>
        <strain>ATCC 23445 / NCTC 10510</strain>
    </source>
</reference>
<proteinExistence type="inferred from homology"/>
<protein>
    <recommendedName>
        <fullName evidence="1">Peptide methionine sulfoxide reductase MsrA</fullName>
        <shortName evidence="1">Protein-methionine-S-oxide reductase</shortName>
        <ecNumber evidence="1">1.8.4.11</ecNumber>
    </recommendedName>
    <alternativeName>
        <fullName evidence="1">Peptide-methionine (S)-S-oxide reductase</fullName>
        <shortName evidence="1">Peptide Met(O) reductase</shortName>
    </alternativeName>
</protein>
<accession>A9WW77</accession>
<name>MSRA_BRUSI</name>
<dbReference type="EC" id="1.8.4.11" evidence="1"/>
<dbReference type="EMBL" id="CP000912">
    <property type="protein sequence ID" value="ABY40013.1"/>
    <property type="molecule type" value="Genomic_DNA"/>
</dbReference>
<dbReference type="RefSeq" id="WP_002965585.1">
    <property type="nucleotide sequence ID" value="NC_010167.1"/>
</dbReference>
<dbReference type="SMR" id="A9WW77"/>
<dbReference type="GeneID" id="97534887"/>
<dbReference type="KEGG" id="bmt:BSUIS_B1064"/>
<dbReference type="HOGENOM" id="CLU_031040_10_3_5"/>
<dbReference type="Proteomes" id="UP000008545">
    <property type="component" value="Chromosome II"/>
</dbReference>
<dbReference type="GO" id="GO:0005737">
    <property type="term" value="C:cytoplasm"/>
    <property type="evidence" value="ECO:0007669"/>
    <property type="project" value="TreeGrafter"/>
</dbReference>
<dbReference type="GO" id="GO:0036456">
    <property type="term" value="F:L-methionine-(S)-S-oxide reductase activity"/>
    <property type="evidence" value="ECO:0007669"/>
    <property type="project" value="TreeGrafter"/>
</dbReference>
<dbReference type="GO" id="GO:0008113">
    <property type="term" value="F:peptide-methionine (S)-S-oxide reductase activity"/>
    <property type="evidence" value="ECO:0007669"/>
    <property type="project" value="UniProtKB-UniRule"/>
</dbReference>
<dbReference type="GO" id="GO:0034599">
    <property type="term" value="P:cellular response to oxidative stress"/>
    <property type="evidence" value="ECO:0007669"/>
    <property type="project" value="TreeGrafter"/>
</dbReference>
<dbReference type="GO" id="GO:0036211">
    <property type="term" value="P:protein modification process"/>
    <property type="evidence" value="ECO:0007669"/>
    <property type="project" value="UniProtKB-UniRule"/>
</dbReference>
<dbReference type="FunFam" id="3.30.1060.10:FF:000001">
    <property type="entry name" value="Peptide methionine sulfoxide reductase MsrA"/>
    <property type="match status" value="1"/>
</dbReference>
<dbReference type="Gene3D" id="3.30.1060.10">
    <property type="entry name" value="Peptide methionine sulphoxide reductase MsrA"/>
    <property type="match status" value="1"/>
</dbReference>
<dbReference type="HAMAP" id="MF_01401">
    <property type="entry name" value="MsrA"/>
    <property type="match status" value="1"/>
</dbReference>
<dbReference type="InterPro" id="IPR002569">
    <property type="entry name" value="Met_Sox_Rdtase_MsrA_dom"/>
</dbReference>
<dbReference type="InterPro" id="IPR036509">
    <property type="entry name" value="Met_Sox_Rdtase_MsrA_sf"/>
</dbReference>
<dbReference type="InterPro" id="IPR050162">
    <property type="entry name" value="MsrA_MetSO_reductase"/>
</dbReference>
<dbReference type="NCBIfam" id="TIGR00401">
    <property type="entry name" value="msrA"/>
    <property type="match status" value="1"/>
</dbReference>
<dbReference type="PANTHER" id="PTHR42799">
    <property type="entry name" value="MITOCHONDRIAL PEPTIDE METHIONINE SULFOXIDE REDUCTASE"/>
    <property type="match status" value="1"/>
</dbReference>
<dbReference type="PANTHER" id="PTHR42799:SF2">
    <property type="entry name" value="MITOCHONDRIAL PEPTIDE METHIONINE SULFOXIDE REDUCTASE"/>
    <property type="match status" value="1"/>
</dbReference>
<dbReference type="Pfam" id="PF01625">
    <property type="entry name" value="PMSR"/>
    <property type="match status" value="1"/>
</dbReference>
<dbReference type="SUPFAM" id="SSF55068">
    <property type="entry name" value="Peptide methionine sulfoxide reductase"/>
    <property type="match status" value="1"/>
</dbReference>
<sequence>MSFFDSYRKKMQMPSKEEVLPGRVQPIPTAAAHFVSGHPLKGPWPDGMKQVLFGMGCFWGAERLFWQVPGVYVTAVGYAGGITPNPTYEETCTGLTGHAEVVLVVYDPKVVTLNELLALFWEEHDPTQGMRQGNDIGTTYRSVIYTFNAVDRAVAEKSRDAYSQALASRGLGPVTTQIADAPDFYYAEDYHQQYLAKNPDGYCGLRGTGVSCPIPLAH</sequence>
<organism>
    <name type="scientific">Brucella suis (strain ATCC 23445 / NCTC 10510)</name>
    <dbReference type="NCBI Taxonomy" id="470137"/>
    <lineage>
        <taxon>Bacteria</taxon>
        <taxon>Pseudomonadati</taxon>
        <taxon>Pseudomonadota</taxon>
        <taxon>Alphaproteobacteria</taxon>
        <taxon>Hyphomicrobiales</taxon>
        <taxon>Brucellaceae</taxon>
        <taxon>Brucella/Ochrobactrum group</taxon>
        <taxon>Brucella</taxon>
    </lineage>
</organism>
<keyword id="KW-0560">Oxidoreductase</keyword>
<evidence type="ECO:0000255" key="1">
    <source>
        <dbReference type="HAMAP-Rule" id="MF_01401"/>
    </source>
</evidence>
<gene>
    <name evidence="1" type="primary">msrA</name>
    <name type="ordered locus">BSUIS_B1064</name>
</gene>